<keyword id="KW-0963">Cytoplasm</keyword>
<keyword id="KW-0238">DNA-binding</keyword>
<keyword id="KW-1185">Reference proteome</keyword>
<organism>
    <name type="scientific">Thermosynechococcus vestitus (strain NIES-2133 / IAM M-273 / BP-1)</name>
    <dbReference type="NCBI Taxonomy" id="197221"/>
    <lineage>
        <taxon>Bacteria</taxon>
        <taxon>Bacillati</taxon>
        <taxon>Cyanobacteriota</taxon>
        <taxon>Cyanophyceae</taxon>
        <taxon>Acaryochloridales</taxon>
        <taxon>Thermosynechococcaceae</taxon>
        <taxon>Thermosynechococcus</taxon>
    </lineage>
</organism>
<name>Y723_THEVB</name>
<comment type="function">
    <text evidence="1">Binds to DNA and alters its conformation. May be involved in regulation of gene expression, nucleoid organization and DNA protection.</text>
</comment>
<comment type="subunit">
    <text evidence="1">Homodimer.</text>
</comment>
<comment type="subcellular location">
    <subcellularLocation>
        <location evidence="1">Cytoplasm</location>
        <location evidence="1">Nucleoid</location>
    </subcellularLocation>
</comment>
<comment type="similarity">
    <text evidence="1">Belongs to the YbaB/EbfC family.</text>
</comment>
<reference key="1">
    <citation type="journal article" date="2002" name="DNA Res.">
        <title>Complete genome structure of the thermophilic cyanobacterium Thermosynechococcus elongatus BP-1.</title>
        <authorList>
            <person name="Nakamura Y."/>
            <person name="Kaneko T."/>
            <person name="Sato S."/>
            <person name="Ikeuchi M."/>
            <person name="Katoh H."/>
            <person name="Sasamoto S."/>
            <person name="Watanabe A."/>
            <person name="Iriguchi M."/>
            <person name="Kawashima K."/>
            <person name="Kimura T."/>
            <person name="Kishida Y."/>
            <person name="Kiyokawa C."/>
            <person name="Kohara M."/>
            <person name="Matsumoto M."/>
            <person name="Matsuno A."/>
            <person name="Nakazaki N."/>
            <person name="Shimpo S."/>
            <person name="Sugimoto M."/>
            <person name="Takeuchi C."/>
            <person name="Yamada M."/>
            <person name="Tabata S."/>
        </authorList>
    </citation>
    <scope>NUCLEOTIDE SEQUENCE [LARGE SCALE GENOMIC DNA]</scope>
    <source>
        <strain>NIES-2133 / IAM M-273 / BP-1</strain>
    </source>
</reference>
<accession>Q8DKX6</accession>
<sequence>MAQGQGFGFGLGKMKELAAAIQKAQQVQEGAKKLQEDLERMDIEGQAAGGAVKVIMSGTQEPRRVEISPDLLSEGAEVLSDLVTAAMRDAYQKSTATMRERMEELTGSLNVPGLG</sequence>
<protein>
    <recommendedName>
        <fullName evidence="1">Nucleoid-associated protein tlr0723</fullName>
    </recommendedName>
</protein>
<proteinExistence type="inferred from homology"/>
<dbReference type="EMBL" id="BA000039">
    <property type="protein sequence ID" value="BAC08274.1"/>
    <property type="molecule type" value="Genomic_DNA"/>
</dbReference>
<dbReference type="RefSeq" id="NP_681512.1">
    <property type="nucleotide sequence ID" value="NC_004113.1"/>
</dbReference>
<dbReference type="RefSeq" id="WP_011056570.1">
    <property type="nucleotide sequence ID" value="NC_004113.1"/>
</dbReference>
<dbReference type="SMR" id="Q8DKX6"/>
<dbReference type="STRING" id="197221.gene:10747313"/>
<dbReference type="EnsemblBacteria" id="BAC08274">
    <property type="protein sequence ID" value="BAC08274"/>
    <property type="gene ID" value="BAC08274"/>
</dbReference>
<dbReference type="KEGG" id="tel:tlr0723"/>
<dbReference type="PATRIC" id="fig|197221.4.peg.763"/>
<dbReference type="eggNOG" id="COG0718">
    <property type="taxonomic scope" value="Bacteria"/>
</dbReference>
<dbReference type="Proteomes" id="UP000000440">
    <property type="component" value="Chromosome"/>
</dbReference>
<dbReference type="GO" id="GO:0043590">
    <property type="term" value="C:bacterial nucleoid"/>
    <property type="evidence" value="ECO:0007669"/>
    <property type="project" value="UniProtKB-UniRule"/>
</dbReference>
<dbReference type="GO" id="GO:0005829">
    <property type="term" value="C:cytosol"/>
    <property type="evidence" value="ECO:0007669"/>
    <property type="project" value="TreeGrafter"/>
</dbReference>
<dbReference type="GO" id="GO:0003677">
    <property type="term" value="F:DNA binding"/>
    <property type="evidence" value="ECO:0007669"/>
    <property type="project" value="UniProtKB-UniRule"/>
</dbReference>
<dbReference type="Gene3D" id="3.30.1310.10">
    <property type="entry name" value="Nucleoid-associated protein YbaB-like domain"/>
    <property type="match status" value="1"/>
</dbReference>
<dbReference type="HAMAP" id="MF_00274">
    <property type="entry name" value="DNA_YbaB_EbfC"/>
    <property type="match status" value="1"/>
</dbReference>
<dbReference type="InterPro" id="IPR036894">
    <property type="entry name" value="YbaB-like_sf"/>
</dbReference>
<dbReference type="InterPro" id="IPR004401">
    <property type="entry name" value="YbaB/EbfC"/>
</dbReference>
<dbReference type="NCBIfam" id="TIGR00103">
    <property type="entry name" value="DNA_YbaB_EbfC"/>
    <property type="match status" value="1"/>
</dbReference>
<dbReference type="PANTHER" id="PTHR33449">
    <property type="entry name" value="NUCLEOID-ASSOCIATED PROTEIN YBAB"/>
    <property type="match status" value="1"/>
</dbReference>
<dbReference type="PANTHER" id="PTHR33449:SF1">
    <property type="entry name" value="NUCLEOID-ASSOCIATED PROTEIN YBAB"/>
    <property type="match status" value="1"/>
</dbReference>
<dbReference type="Pfam" id="PF02575">
    <property type="entry name" value="YbaB_DNA_bd"/>
    <property type="match status" value="1"/>
</dbReference>
<dbReference type="PIRSF" id="PIRSF004555">
    <property type="entry name" value="UCP004555"/>
    <property type="match status" value="1"/>
</dbReference>
<dbReference type="SUPFAM" id="SSF82607">
    <property type="entry name" value="YbaB-like"/>
    <property type="match status" value="1"/>
</dbReference>
<feature type="chain" id="PRO_0000170454" description="Nucleoid-associated protein tlr0723">
    <location>
        <begin position="1"/>
        <end position="115"/>
    </location>
</feature>
<gene>
    <name type="ordered locus">tlr0723</name>
</gene>
<evidence type="ECO:0000255" key="1">
    <source>
        <dbReference type="HAMAP-Rule" id="MF_00274"/>
    </source>
</evidence>